<organism>
    <name type="scientific">Meyerozyma guilliermondii (strain ATCC 6260 / CBS 566 / DSM 6381 / JCM 1539 / NBRC 10279 / NRRL Y-324)</name>
    <name type="common">Yeast</name>
    <name type="synonym">Candida guilliermondii</name>
    <dbReference type="NCBI Taxonomy" id="294746"/>
    <lineage>
        <taxon>Eukaryota</taxon>
        <taxon>Fungi</taxon>
        <taxon>Dikarya</taxon>
        <taxon>Ascomycota</taxon>
        <taxon>Saccharomycotina</taxon>
        <taxon>Pichiomycetes</taxon>
        <taxon>Debaryomycetaceae</taxon>
        <taxon>Meyerozyma</taxon>
    </lineage>
</organism>
<dbReference type="EC" id="2.1.1.33" evidence="1"/>
<dbReference type="EMBL" id="CH408155">
    <property type="protein sequence ID" value="EDK36730.2"/>
    <property type="molecule type" value="Genomic_DNA"/>
</dbReference>
<dbReference type="RefSeq" id="XP_001487451.1">
    <property type="nucleotide sequence ID" value="XM_001487401.1"/>
</dbReference>
<dbReference type="SMR" id="A5DC23"/>
<dbReference type="FunCoup" id="A5DC23">
    <property type="interactions" value="529"/>
</dbReference>
<dbReference type="STRING" id="294746.A5DC23"/>
<dbReference type="GeneID" id="5128595"/>
<dbReference type="KEGG" id="pgu:PGUG_00828"/>
<dbReference type="VEuPathDB" id="FungiDB:PGUG_00828"/>
<dbReference type="eggNOG" id="KOG3115">
    <property type="taxonomic scope" value="Eukaryota"/>
</dbReference>
<dbReference type="HOGENOM" id="CLU_050910_3_1_1"/>
<dbReference type="InParanoid" id="A5DC23"/>
<dbReference type="OMA" id="LPNYFAK"/>
<dbReference type="OrthoDB" id="47276at2759"/>
<dbReference type="UniPathway" id="UPA00989"/>
<dbReference type="Proteomes" id="UP000001997">
    <property type="component" value="Unassembled WGS sequence"/>
</dbReference>
<dbReference type="GO" id="GO:0005634">
    <property type="term" value="C:nucleus"/>
    <property type="evidence" value="ECO:0007669"/>
    <property type="project" value="UniProtKB-SubCell"/>
</dbReference>
<dbReference type="GO" id="GO:0106143">
    <property type="term" value="C:tRNA (m7G46) methyltransferase complex"/>
    <property type="evidence" value="ECO:0007669"/>
    <property type="project" value="EnsemblFungi"/>
</dbReference>
<dbReference type="GO" id="GO:0008176">
    <property type="term" value="F:tRNA (guanine(46)-N7)-methyltransferase activity"/>
    <property type="evidence" value="ECO:0007669"/>
    <property type="project" value="UniProtKB-UniRule"/>
</dbReference>
<dbReference type="GO" id="GO:0000049">
    <property type="term" value="F:tRNA binding"/>
    <property type="evidence" value="ECO:0007669"/>
    <property type="project" value="UniProtKB-UniRule"/>
</dbReference>
<dbReference type="CDD" id="cd02440">
    <property type="entry name" value="AdoMet_MTases"/>
    <property type="match status" value="1"/>
</dbReference>
<dbReference type="FunFam" id="3.40.50.150:FF:000060">
    <property type="entry name" value="tRNA (guanine-N(7)-)-methyltransferase"/>
    <property type="match status" value="1"/>
</dbReference>
<dbReference type="Gene3D" id="3.40.50.150">
    <property type="entry name" value="Vaccinia Virus protein VP39"/>
    <property type="match status" value="1"/>
</dbReference>
<dbReference type="HAMAP" id="MF_03055">
    <property type="entry name" value="tRNA_methyltr_TrmB_euk"/>
    <property type="match status" value="1"/>
</dbReference>
<dbReference type="InterPro" id="IPR029063">
    <property type="entry name" value="SAM-dependent_MTases_sf"/>
</dbReference>
<dbReference type="InterPro" id="IPR025763">
    <property type="entry name" value="Trm8_euk"/>
</dbReference>
<dbReference type="InterPro" id="IPR003358">
    <property type="entry name" value="tRNA_(Gua-N-7)_MeTrfase_Trmb"/>
</dbReference>
<dbReference type="NCBIfam" id="TIGR00091">
    <property type="entry name" value="tRNA (guanosine(46)-N7)-methyltransferase TrmB"/>
    <property type="match status" value="1"/>
</dbReference>
<dbReference type="PANTHER" id="PTHR23417">
    <property type="entry name" value="3-DEOXY-D-MANNO-OCTULOSONIC-ACID TRANSFERASE/TRNA GUANINE-N 7 - -METHYLTRANSFERASE"/>
    <property type="match status" value="1"/>
</dbReference>
<dbReference type="PANTHER" id="PTHR23417:SF16">
    <property type="entry name" value="TRNA (GUANINE-N(7)-)-METHYLTRANSFERASE"/>
    <property type="match status" value="1"/>
</dbReference>
<dbReference type="Pfam" id="PF02390">
    <property type="entry name" value="Methyltransf_4"/>
    <property type="match status" value="1"/>
</dbReference>
<dbReference type="SUPFAM" id="SSF53335">
    <property type="entry name" value="S-adenosyl-L-methionine-dependent methyltransferases"/>
    <property type="match status" value="1"/>
</dbReference>
<dbReference type="PROSITE" id="PS51625">
    <property type="entry name" value="SAM_MT_TRMB"/>
    <property type="match status" value="1"/>
</dbReference>
<name>TRMB_PICGU</name>
<keyword id="KW-0489">Methyltransferase</keyword>
<keyword id="KW-0539">Nucleus</keyword>
<keyword id="KW-1185">Reference proteome</keyword>
<keyword id="KW-0694">RNA-binding</keyword>
<keyword id="KW-0949">S-adenosyl-L-methionine</keyword>
<keyword id="KW-0808">Transferase</keyword>
<keyword id="KW-0819">tRNA processing</keyword>
<keyword id="KW-0820">tRNA-binding</keyword>
<evidence type="ECO:0000255" key="1">
    <source>
        <dbReference type="HAMAP-Rule" id="MF_03055"/>
    </source>
</evidence>
<evidence type="ECO:0000256" key="2">
    <source>
        <dbReference type="SAM" id="MobiDB-lite"/>
    </source>
</evidence>
<reference key="1">
    <citation type="journal article" date="2009" name="Nature">
        <title>Evolution of pathogenicity and sexual reproduction in eight Candida genomes.</title>
        <authorList>
            <person name="Butler G."/>
            <person name="Rasmussen M.D."/>
            <person name="Lin M.F."/>
            <person name="Santos M.A.S."/>
            <person name="Sakthikumar S."/>
            <person name="Munro C.A."/>
            <person name="Rheinbay E."/>
            <person name="Grabherr M."/>
            <person name="Forche A."/>
            <person name="Reedy J.L."/>
            <person name="Agrafioti I."/>
            <person name="Arnaud M.B."/>
            <person name="Bates S."/>
            <person name="Brown A.J.P."/>
            <person name="Brunke S."/>
            <person name="Costanzo M.C."/>
            <person name="Fitzpatrick D.A."/>
            <person name="de Groot P.W.J."/>
            <person name="Harris D."/>
            <person name="Hoyer L.L."/>
            <person name="Hube B."/>
            <person name="Klis F.M."/>
            <person name="Kodira C."/>
            <person name="Lennard N."/>
            <person name="Logue M.E."/>
            <person name="Martin R."/>
            <person name="Neiman A.M."/>
            <person name="Nikolaou E."/>
            <person name="Quail M.A."/>
            <person name="Quinn J."/>
            <person name="Santos M.C."/>
            <person name="Schmitzberger F.F."/>
            <person name="Sherlock G."/>
            <person name="Shah P."/>
            <person name="Silverstein K.A.T."/>
            <person name="Skrzypek M.S."/>
            <person name="Soll D."/>
            <person name="Staggs R."/>
            <person name="Stansfield I."/>
            <person name="Stumpf M.P.H."/>
            <person name="Sudbery P.E."/>
            <person name="Srikantha T."/>
            <person name="Zeng Q."/>
            <person name="Berman J."/>
            <person name="Berriman M."/>
            <person name="Heitman J."/>
            <person name="Gow N.A.R."/>
            <person name="Lorenz M.C."/>
            <person name="Birren B.W."/>
            <person name="Kellis M."/>
            <person name="Cuomo C.A."/>
        </authorList>
    </citation>
    <scope>NUCLEOTIDE SEQUENCE [LARGE SCALE GENOMIC DNA]</scope>
    <source>
        <strain>ATCC 6260 / CBS 566 / DSM 6381 / JCM 1539 / NBRC 10279 / NRRL Y-324</strain>
    </source>
</reference>
<comment type="function">
    <text evidence="1">Catalyzes the formation of N(7)-methylguanine at position 46 (m7G46) in tRNA.</text>
</comment>
<comment type="catalytic activity">
    <reaction evidence="1">
        <text>guanosine(46) in tRNA + S-adenosyl-L-methionine = N(7)-methylguanosine(46) in tRNA + S-adenosyl-L-homocysteine</text>
        <dbReference type="Rhea" id="RHEA:42708"/>
        <dbReference type="Rhea" id="RHEA-COMP:10188"/>
        <dbReference type="Rhea" id="RHEA-COMP:10189"/>
        <dbReference type="ChEBI" id="CHEBI:57856"/>
        <dbReference type="ChEBI" id="CHEBI:59789"/>
        <dbReference type="ChEBI" id="CHEBI:74269"/>
        <dbReference type="ChEBI" id="CHEBI:74480"/>
        <dbReference type="EC" id="2.1.1.33"/>
    </reaction>
</comment>
<comment type="pathway">
    <text evidence="1">tRNA modification; N(7)-methylguanine-tRNA biosynthesis.</text>
</comment>
<comment type="subunit">
    <text evidence="1">Forms a complex with TRM82.</text>
</comment>
<comment type="subcellular location">
    <subcellularLocation>
        <location evidence="1">Nucleus</location>
    </subcellularLocation>
</comment>
<comment type="similarity">
    <text evidence="1">Belongs to the class I-like SAM-binding methyltransferase superfamily. TrmB family.</text>
</comment>
<accession>A5DC23</accession>
<feature type="chain" id="PRO_0000370602" description="tRNA (guanine-N(7)-)-methyltransferase">
    <location>
        <begin position="1"/>
        <end position="272"/>
    </location>
</feature>
<feature type="region of interest" description="Disordered" evidence="2">
    <location>
        <begin position="1"/>
        <end position="43"/>
    </location>
</feature>
<feature type="compositionally biased region" description="Basic and acidic residues" evidence="2">
    <location>
        <begin position="1"/>
        <end position="20"/>
    </location>
</feature>
<feature type="active site" evidence="1">
    <location>
        <position position="171"/>
    </location>
</feature>
<feature type="binding site" evidence="1">
    <location>
        <position position="89"/>
    </location>
    <ligand>
        <name>S-adenosyl-L-methionine</name>
        <dbReference type="ChEBI" id="CHEBI:59789"/>
    </ligand>
</feature>
<feature type="binding site" evidence="1">
    <location>
        <begin position="112"/>
        <end position="113"/>
    </location>
    <ligand>
        <name>S-adenosyl-L-methionine</name>
        <dbReference type="ChEBI" id="CHEBI:59789"/>
    </ligand>
</feature>
<feature type="binding site" evidence="1">
    <location>
        <begin position="148"/>
        <end position="149"/>
    </location>
    <ligand>
        <name>S-adenosyl-L-methionine</name>
        <dbReference type="ChEBI" id="CHEBI:59789"/>
    </ligand>
</feature>
<feature type="binding site" evidence="1">
    <location>
        <position position="168"/>
    </location>
    <ligand>
        <name>S-adenosyl-L-methionine</name>
        <dbReference type="ChEBI" id="CHEBI:59789"/>
    </ligand>
</feature>
<feature type="binding site" evidence="1">
    <location>
        <begin position="246"/>
        <end position="248"/>
    </location>
    <ligand>
        <name>S-adenosyl-L-methionine</name>
        <dbReference type="ChEBI" id="CHEBI:59789"/>
    </ligand>
</feature>
<sequence length="272" mass="31916">MSTDSESKRRAYREEKEGARKKSVKLAPEATPESKPDLPRKRYYRQRAHSNPFSDHSLDYPRNPDAMEWGKLYPEYANTDKKVEIADIGCGYGGLMIGLAKEYPQTMILGMEIRVQVTQYVEDRIIALREKHEKDEVNYQNIAVLRGNAMKFLPNFFHRGQLKKMFFCFPDPHFKQRKHKARIITTTLLSEYAYVLREEGVLYTITDVEDLHIWMVKHLDDHPLFERLDKEWEKNDKCVSIMYGSTEEGQKVARNKGSKFVACFRRVANPEE</sequence>
<protein>
    <recommendedName>
        <fullName evidence="1">tRNA (guanine-N(7)-)-methyltransferase</fullName>
        <ecNumber evidence="1">2.1.1.33</ecNumber>
    </recommendedName>
    <alternativeName>
        <fullName evidence="1">Transfer RNA methyltransferase 8</fullName>
    </alternativeName>
    <alternativeName>
        <fullName evidence="1">tRNA (guanine(46)-N(7))-methyltransferase</fullName>
    </alternativeName>
    <alternativeName>
        <fullName evidence="1">tRNA(m7G46)-methyltransferase</fullName>
    </alternativeName>
</protein>
<proteinExistence type="inferred from homology"/>
<gene>
    <name evidence="1" type="primary">TRM8</name>
    <name type="ORF">PGUG_00828</name>
</gene>